<sequence length="1167" mass="134105">MKNWTAEQMRAITSRGNALLVSAAAGAGKTSVLVERVLSRVLTDTPPVDIDRLLVVTFTEAAAGEMKERLGTELLKRLNEDPGNSRILEQLELLPVADISTLHSFCHKIIRKYGRVCGYETKFAILEGPRETYLKNKVLEEILEERYEKGDRELFALLEYLNDEKNDRNLKELILNLYHFSRSNPEPEKWLLDSLNLFNGNWERFEDTFWYREIKSSTEMWLEYILELLGRAKSVAEKYGQARAFSLLAEDMEKVRGLYAKLNEGYEAAKQYLSQVKFGTFSWGRGVGGKDEAKDLRDKAKEQFETIKKRYFSWEAGNFREELRTLTSYLDPLVKLVREFSRKYQEEKRKHGFADFSDLEHWALDILKSGVYRELREKYVEILVDEYQDINGLQEEILTYVSRDGQNLFMVGDVKQSIYRFRWARPEIFLKKYEDFTDEKKIELSLNFRSREEIIATVNFIFKQIMKKRVAELSYDEKAFLKKGADYLPNANCFAELHLIEGKPEEDINSNGEPEEDLTAVHREARLVAAKILKLKEEGFKVFDRETKEFRPLQYRDIVILSRSLSNSSNIWQEELTRAGIPVYVEGAGSFLNSKEILLMTSFLKVIDNPCQDVPLAAVLCSPVAGLTYEELWQVRKEYPEGLLYDALKNKSLGKDELSVKSQKFLELLVEFQKLSRQISLAELVNEIYRKTNLPEIFGAYPGGEVRQANLKLLHDLAVDFAEINGGGIYNFLTFLSQAAESEDFSPAKLIGEADDVVRVMSVHKSKGLEFPVVFVVGLGKRFKFDYSNTVFLHSDLGFGPKFFDPEKRIRRHSIASQILSERMRRETLAEEMRILYVALTRAREKLILVGTVKNLAKKMAGWQSQTEALKDTLSDGQIARAGNFLDWIGPVVFREGSDLPDCLKVEVHPQQEKIEGEQWELPEVLRVKLLTKTPFTEETDYTGQFRAGLEFNYPGLKIAKLPAKMSVSDLKEVFSTDDVISLEDEDEVFLPGVYFEDGAMLGIVYHEFLRRIDFQGDLSASGLKAQGETLVAEGVLPPESREMLDFTKIARIFATPLGQRILRAREIYPEFPFTLGVKAGEIYPEATGFSEKILVRGVIDLLALEEDGFFIVDWKTDRVTGDILNERLKEYAGQLNLYARAVEEITGKKVKEKYLYFINLEKEVRV</sequence>
<feature type="chain" id="PRO_0000379246" description="ATP-dependent helicase/nuclease subunit A">
    <location>
        <begin position="1"/>
        <end position="1167"/>
    </location>
</feature>
<feature type="domain" description="UvrD-like helicase ATP-binding" evidence="1">
    <location>
        <begin position="2"/>
        <end position="451"/>
    </location>
</feature>
<feature type="domain" description="UvrD-like helicase C-terminal" evidence="1">
    <location>
        <begin position="478"/>
        <end position="768"/>
    </location>
</feature>
<feature type="binding site" evidence="1">
    <location>
        <begin position="23"/>
        <end position="30"/>
    </location>
    <ligand>
        <name>ATP</name>
        <dbReference type="ChEBI" id="CHEBI:30616"/>
    </ligand>
</feature>
<gene>
    <name evidence="1" type="primary">addA</name>
    <name type="synonym">rexA</name>
    <name type="ordered locus">CHY_2186</name>
</gene>
<proteinExistence type="inferred from homology"/>
<accession>Q3AA35</accession>
<dbReference type="EC" id="3.1.-.-" evidence="1"/>
<dbReference type="EC" id="5.6.2.4" evidence="1"/>
<dbReference type="EMBL" id="CP000141">
    <property type="protein sequence ID" value="ABB14602.1"/>
    <property type="molecule type" value="Genomic_DNA"/>
</dbReference>
<dbReference type="RefSeq" id="WP_011345072.1">
    <property type="nucleotide sequence ID" value="NC_007503.1"/>
</dbReference>
<dbReference type="SMR" id="Q3AA35"/>
<dbReference type="FunCoup" id="Q3AA35">
    <property type="interactions" value="14"/>
</dbReference>
<dbReference type="STRING" id="246194.CHY_2186"/>
<dbReference type="KEGG" id="chy:CHY_2186"/>
<dbReference type="eggNOG" id="COG1074">
    <property type="taxonomic scope" value="Bacteria"/>
</dbReference>
<dbReference type="HOGENOM" id="CLU_001114_3_1_9"/>
<dbReference type="InParanoid" id="Q3AA35"/>
<dbReference type="OrthoDB" id="9810135at2"/>
<dbReference type="Proteomes" id="UP000002706">
    <property type="component" value="Chromosome"/>
</dbReference>
<dbReference type="GO" id="GO:0005829">
    <property type="term" value="C:cytosol"/>
    <property type="evidence" value="ECO:0007669"/>
    <property type="project" value="TreeGrafter"/>
</dbReference>
<dbReference type="GO" id="GO:0033202">
    <property type="term" value="C:DNA helicase complex"/>
    <property type="evidence" value="ECO:0007669"/>
    <property type="project" value="TreeGrafter"/>
</dbReference>
<dbReference type="GO" id="GO:0043138">
    <property type="term" value="F:3'-5' DNA helicase activity"/>
    <property type="evidence" value="ECO:0007669"/>
    <property type="project" value="UniProtKB-UniRule"/>
</dbReference>
<dbReference type="GO" id="GO:0008408">
    <property type="term" value="F:3'-5' exonuclease activity"/>
    <property type="evidence" value="ECO:0007669"/>
    <property type="project" value="UniProtKB-UniRule"/>
</dbReference>
<dbReference type="GO" id="GO:0005524">
    <property type="term" value="F:ATP binding"/>
    <property type="evidence" value="ECO:0007669"/>
    <property type="project" value="UniProtKB-UniRule"/>
</dbReference>
<dbReference type="GO" id="GO:0016887">
    <property type="term" value="F:ATP hydrolysis activity"/>
    <property type="evidence" value="ECO:0007669"/>
    <property type="project" value="RHEA"/>
</dbReference>
<dbReference type="GO" id="GO:0003690">
    <property type="term" value="F:double-stranded DNA binding"/>
    <property type="evidence" value="ECO:0007669"/>
    <property type="project" value="UniProtKB-UniRule"/>
</dbReference>
<dbReference type="GO" id="GO:0000724">
    <property type="term" value="P:double-strand break repair via homologous recombination"/>
    <property type="evidence" value="ECO:0007669"/>
    <property type="project" value="UniProtKB-UniRule"/>
</dbReference>
<dbReference type="CDD" id="cd17932">
    <property type="entry name" value="DEXQc_UvrD"/>
    <property type="match status" value="1"/>
</dbReference>
<dbReference type="Gene3D" id="3.90.320.10">
    <property type="match status" value="1"/>
</dbReference>
<dbReference type="Gene3D" id="3.40.50.300">
    <property type="entry name" value="P-loop containing nucleotide triphosphate hydrolases"/>
    <property type="match status" value="4"/>
</dbReference>
<dbReference type="HAMAP" id="MF_01451">
    <property type="entry name" value="AddA"/>
    <property type="match status" value="1"/>
</dbReference>
<dbReference type="InterPro" id="IPR014152">
    <property type="entry name" value="AddA"/>
</dbReference>
<dbReference type="InterPro" id="IPR014017">
    <property type="entry name" value="DNA_helicase_UvrD-like_C"/>
</dbReference>
<dbReference type="InterPro" id="IPR000212">
    <property type="entry name" value="DNA_helicase_UvrD/REP"/>
</dbReference>
<dbReference type="InterPro" id="IPR027417">
    <property type="entry name" value="P-loop_NTPase"/>
</dbReference>
<dbReference type="InterPro" id="IPR011604">
    <property type="entry name" value="PDDEXK-like_dom_sf"/>
</dbReference>
<dbReference type="InterPro" id="IPR038726">
    <property type="entry name" value="PDDEXK_AddAB-type"/>
</dbReference>
<dbReference type="InterPro" id="IPR011335">
    <property type="entry name" value="Restrct_endonuc-II-like"/>
</dbReference>
<dbReference type="InterPro" id="IPR014016">
    <property type="entry name" value="UvrD-like_ATP-bd"/>
</dbReference>
<dbReference type="NCBIfam" id="TIGR02785">
    <property type="entry name" value="addA_Gpos"/>
    <property type="match status" value="1"/>
</dbReference>
<dbReference type="PANTHER" id="PTHR11070:SF48">
    <property type="entry name" value="ATP-DEPENDENT HELICASE_NUCLEASE SUBUNIT A"/>
    <property type="match status" value="1"/>
</dbReference>
<dbReference type="PANTHER" id="PTHR11070">
    <property type="entry name" value="UVRD / RECB / PCRA DNA HELICASE FAMILY MEMBER"/>
    <property type="match status" value="1"/>
</dbReference>
<dbReference type="Pfam" id="PF12705">
    <property type="entry name" value="PDDEXK_1"/>
    <property type="match status" value="1"/>
</dbReference>
<dbReference type="Pfam" id="PF00580">
    <property type="entry name" value="UvrD-helicase"/>
    <property type="match status" value="1"/>
</dbReference>
<dbReference type="Pfam" id="PF13361">
    <property type="entry name" value="UvrD_C"/>
    <property type="match status" value="1"/>
</dbReference>
<dbReference type="SUPFAM" id="SSF52540">
    <property type="entry name" value="P-loop containing nucleoside triphosphate hydrolases"/>
    <property type="match status" value="1"/>
</dbReference>
<dbReference type="SUPFAM" id="SSF52980">
    <property type="entry name" value="Restriction endonuclease-like"/>
    <property type="match status" value="1"/>
</dbReference>
<dbReference type="PROSITE" id="PS51198">
    <property type="entry name" value="UVRD_HELICASE_ATP_BIND"/>
    <property type="match status" value="1"/>
</dbReference>
<dbReference type="PROSITE" id="PS51217">
    <property type="entry name" value="UVRD_HELICASE_CTER"/>
    <property type="match status" value="1"/>
</dbReference>
<protein>
    <recommendedName>
        <fullName evidence="1">ATP-dependent helicase/nuclease subunit A</fullName>
        <ecNumber evidence="1">3.1.-.-</ecNumber>
        <ecNumber evidence="1">5.6.2.4</ecNumber>
    </recommendedName>
    <alternativeName>
        <fullName evidence="1">ATP-dependent helicase/nuclease AddA</fullName>
    </alternativeName>
    <alternativeName>
        <fullName evidence="1">DNA 3'-5' helicase AddA</fullName>
    </alternativeName>
</protein>
<name>ADDA_CARHZ</name>
<evidence type="ECO:0000255" key="1">
    <source>
        <dbReference type="HAMAP-Rule" id="MF_01451"/>
    </source>
</evidence>
<comment type="function">
    <text evidence="1">The heterodimer acts as both an ATP-dependent DNA helicase and an ATP-dependent, dual-direction single-stranded exonuclease. Recognizes the chi site generating a DNA molecule suitable for the initiation of homologous recombination. The AddA nuclease domain is required for chi fragment generation; this subunit has the helicase and 3' -&gt; 5' nuclease activities.</text>
</comment>
<comment type="catalytic activity">
    <reaction evidence="1">
        <text>Couples ATP hydrolysis with the unwinding of duplex DNA by translocating in the 3'-5' direction.</text>
        <dbReference type="EC" id="5.6.2.4"/>
    </reaction>
</comment>
<comment type="catalytic activity">
    <reaction evidence="1">
        <text>ATP + H2O = ADP + phosphate + H(+)</text>
        <dbReference type="Rhea" id="RHEA:13065"/>
        <dbReference type="ChEBI" id="CHEBI:15377"/>
        <dbReference type="ChEBI" id="CHEBI:15378"/>
        <dbReference type="ChEBI" id="CHEBI:30616"/>
        <dbReference type="ChEBI" id="CHEBI:43474"/>
        <dbReference type="ChEBI" id="CHEBI:456216"/>
        <dbReference type="EC" id="5.6.2.4"/>
    </reaction>
</comment>
<comment type="cofactor">
    <cofactor evidence="1">
        <name>Mg(2+)</name>
        <dbReference type="ChEBI" id="CHEBI:18420"/>
    </cofactor>
</comment>
<comment type="subunit">
    <text evidence="1">Heterodimer of AddA and AddB/RexB.</text>
</comment>
<comment type="similarity">
    <text evidence="1">Belongs to the helicase family. AddA subfamily.</text>
</comment>
<reference key="1">
    <citation type="journal article" date="2005" name="PLoS Genet.">
        <title>Life in hot carbon monoxide: the complete genome sequence of Carboxydothermus hydrogenoformans Z-2901.</title>
        <authorList>
            <person name="Wu M."/>
            <person name="Ren Q."/>
            <person name="Durkin A.S."/>
            <person name="Daugherty S.C."/>
            <person name="Brinkac L.M."/>
            <person name="Dodson R.J."/>
            <person name="Madupu R."/>
            <person name="Sullivan S.A."/>
            <person name="Kolonay J.F."/>
            <person name="Nelson W.C."/>
            <person name="Tallon L.J."/>
            <person name="Jones K.M."/>
            <person name="Ulrich L.E."/>
            <person name="Gonzalez J.M."/>
            <person name="Zhulin I.B."/>
            <person name="Robb F.T."/>
            <person name="Eisen J.A."/>
        </authorList>
    </citation>
    <scope>NUCLEOTIDE SEQUENCE [LARGE SCALE GENOMIC DNA]</scope>
    <source>
        <strain>ATCC BAA-161 / DSM 6008 / Z-2901</strain>
    </source>
</reference>
<keyword id="KW-0067">ATP-binding</keyword>
<keyword id="KW-0227">DNA damage</keyword>
<keyword id="KW-0234">DNA repair</keyword>
<keyword id="KW-0238">DNA-binding</keyword>
<keyword id="KW-0269">Exonuclease</keyword>
<keyword id="KW-0347">Helicase</keyword>
<keyword id="KW-0378">Hydrolase</keyword>
<keyword id="KW-0413">Isomerase</keyword>
<keyword id="KW-0540">Nuclease</keyword>
<keyword id="KW-0547">Nucleotide-binding</keyword>
<keyword id="KW-1185">Reference proteome</keyword>
<organism>
    <name type="scientific">Carboxydothermus hydrogenoformans (strain ATCC BAA-161 / DSM 6008 / Z-2901)</name>
    <dbReference type="NCBI Taxonomy" id="246194"/>
    <lineage>
        <taxon>Bacteria</taxon>
        <taxon>Bacillati</taxon>
        <taxon>Bacillota</taxon>
        <taxon>Clostridia</taxon>
        <taxon>Thermoanaerobacterales</taxon>
        <taxon>Thermoanaerobacteraceae</taxon>
        <taxon>Carboxydothermus</taxon>
    </lineage>
</organism>